<comment type="subcellular location">
    <subcellularLocation>
        <location evidence="2">Membrane</location>
        <topology evidence="2">Multi-pass membrane protein</topology>
    </subcellularLocation>
</comment>
<comment type="similarity">
    <text evidence="2">Belongs to the nematode receptor-like protein srd family.</text>
</comment>
<reference key="1">
    <citation type="journal article" date="1998" name="Science">
        <title>Genome sequence of the nematode C. elegans: a platform for investigating biology.</title>
        <authorList>
            <consortium name="The C. elegans sequencing consortium"/>
        </authorList>
    </citation>
    <scope>NUCLEOTIDE SEQUENCE [LARGE SCALE GENOMIC DNA]</scope>
    <source>
        <strain>Bristol N2</strain>
    </source>
</reference>
<sequence length="317" mass="36318">MFRKILSVLNPTVFVLSLCFQIILIYTIIRHSPKNLSTLKAILLTNCCFQLLQSSMVFFTQIQLVNHLVPIELWSYGPCRHFEAFMCYSMFHILQTSSLVSGLTVFLTTFMKYQAARHVRPSKKKNCFVILFISSIVLISAGCGILLVIIQALPLEIREKYYRINLELDEYSVIGIVDYSVLPSRVNGIIINGLVVIVPITCLLLRRKILKLLTASSDALYFQNRVFLQGLTLQIFGHTLVYVPIFICSTISLITKTEYTFAQFFIFVLPHLTTVIDPLLTMYFVTPYRKRLMVWLRLKNDKVHSVSPSTFAVSANH</sequence>
<gene>
    <name type="primary">srd-44</name>
    <name type="ORF">F17A2.8</name>
</gene>
<feature type="chain" id="PRO_0000104524" description="Serpentine receptor class delta-44">
    <location>
        <begin position="1"/>
        <end position="317"/>
    </location>
</feature>
<feature type="transmembrane region" description="Helical" evidence="1">
    <location>
        <begin position="5"/>
        <end position="25"/>
    </location>
</feature>
<feature type="transmembrane region" description="Helical" evidence="1">
    <location>
        <begin position="90"/>
        <end position="110"/>
    </location>
</feature>
<feature type="transmembrane region" description="Helical" evidence="1">
    <location>
        <begin position="130"/>
        <end position="150"/>
    </location>
</feature>
<feature type="transmembrane region" description="Helical" evidence="1">
    <location>
        <begin position="185"/>
        <end position="205"/>
    </location>
</feature>
<feature type="transmembrane region" description="Helical" evidence="1">
    <location>
        <begin position="235"/>
        <end position="255"/>
    </location>
</feature>
<feature type="transmembrane region" description="Helical" evidence="1">
    <location>
        <begin position="264"/>
        <end position="284"/>
    </location>
</feature>
<protein>
    <recommendedName>
        <fullName>Serpentine receptor class delta-44</fullName>
        <shortName>Protein srd-44</shortName>
    </recommendedName>
</protein>
<evidence type="ECO:0000255" key="1"/>
<evidence type="ECO:0000305" key="2"/>
<keyword id="KW-0472">Membrane</keyword>
<keyword id="KW-1185">Reference proteome</keyword>
<keyword id="KW-0812">Transmembrane</keyword>
<keyword id="KW-1133">Transmembrane helix</keyword>
<organism>
    <name type="scientific">Caenorhabditis elegans</name>
    <dbReference type="NCBI Taxonomy" id="6239"/>
    <lineage>
        <taxon>Eukaryota</taxon>
        <taxon>Metazoa</taxon>
        <taxon>Ecdysozoa</taxon>
        <taxon>Nematoda</taxon>
        <taxon>Chromadorea</taxon>
        <taxon>Rhabditida</taxon>
        <taxon>Rhabditina</taxon>
        <taxon>Rhabditomorpha</taxon>
        <taxon>Rhabditoidea</taxon>
        <taxon>Rhabditidae</taxon>
        <taxon>Peloderinae</taxon>
        <taxon>Caenorhabditis</taxon>
    </lineage>
</organism>
<proteinExistence type="inferred from homology"/>
<accession>O17823</accession>
<accession>Q19512</accession>
<accession>Q20346</accession>
<dbReference type="EMBL" id="Z68114">
    <property type="protein sequence ID" value="CAA92163.1"/>
    <property type="molecule type" value="Genomic_DNA"/>
</dbReference>
<dbReference type="EMBL" id="Z68116">
    <property type="protein sequence ID" value="CAA92163.1"/>
    <property type="status" value="JOINED"/>
    <property type="molecule type" value="Genomic_DNA"/>
</dbReference>
<dbReference type="PIR" id="T21047">
    <property type="entry name" value="T21047"/>
</dbReference>
<dbReference type="RefSeq" id="NP_510068.1">
    <property type="nucleotide sequence ID" value="NM_077667.1"/>
</dbReference>
<dbReference type="SMR" id="O17823"/>
<dbReference type="FunCoup" id="O17823">
    <property type="interactions" value="10"/>
</dbReference>
<dbReference type="PaxDb" id="6239-F17A2.8"/>
<dbReference type="EnsemblMetazoa" id="F17A2.8.1">
    <property type="protein sequence ID" value="F17A2.8.1"/>
    <property type="gene ID" value="WBGene00005122"/>
</dbReference>
<dbReference type="GeneID" id="184604"/>
<dbReference type="KEGG" id="cel:CELE_F17A2.8"/>
<dbReference type="UCSC" id="F17A2.8">
    <property type="organism name" value="c. elegans"/>
</dbReference>
<dbReference type="AGR" id="WB:WBGene00005122"/>
<dbReference type="CTD" id="184604"/>
<dbReference type="WormBase" id="F17A2.8">
    <property type="protein sequence ID" value="CE15861"/>
    <property type="gene ID" value="WBGene00005122"/>
    <property type="gene designation" value="srd-44"/>
</dbReference>
<dbReference type="eggNOG" id="ENOG502RT62">
    <property type="taxonomic scope" value="Eukaryota"/>
</dbReference>
<dbReference type="GeneTree" id="ENSGT00970000195825"/>
<dbReference type="HOGENOM" id="CLU_057924_2_0_1"/>
<dbReference type="InParanoid" id="O17823"/>
<dbReference type="OMA" id="TEIRENY"/>
<dbReference type="OrthoDB" id="5830766at2759"/>
<dbReference type="PhylomeDB" id="O17823"/>
<dbReference type="PRO" id="PR:O17823"/>
<dbReference type="Proteomes" id="UP000001940">
    <property type="component" value="Chromosome X"/>
</dbReference>
<dbReference type="GO" id="GO:0016020">
    <property type="term" value="C:membrane"/>
    <property type="evidence" value="ECO:0007669"/>
    <property type="project" value="UniProtKB-SubCell"/>
</dbReference>
<dbReference type="Gene3D" id="1.20.1070.10">
    <property type="entry name" value="Rhodopsin 7-helix transmembrane proteins"/>
    <property type="match status" value="1"/>
</dbReference>
<dbReference type="InterPro" id="IPR019421">
    <property type="entry name" value="7TM_GPCR_serpentine_rcpt_Srd"/>
</dbReference>
<dbReference type="InterPro" id="IPR050920">
    <property type="entry name" value="Nematode_rcpt-like_delta"/>
</dbReference>
<dbReference type="PANTHER" id="PTHR22945:SF51">
    <property type="entry name" value="SERPENTINE RECEPTOR, CLASS D (DELTA)-RELATED"/>
    <property type="match status" value="1"/>
</dbReference>
<dbReference type="PANTHER" id="PTHR22945">
    <property type="entry name" value="SERPENTINE RECEPTOR, CLASS D DELTA"/>
    <property type="match status" value="1"/>
</dbReference>
<dbReference type="Pfam" id="PF10317">
    <property type="entry name" value="7TM_GPCR_Srd"/>
    <property type="match status" value="1"/>
</dbReference>
<dbReference type="SUPFAM" id="SSF81321">
    <property type="entry name" value="Family A G protein-coupled receptor-like"/>
    <property type="match status" value="1"/>
</dbReference>
<name>SRD44_CAEEL</name>